<keyword id="KW-0963">Cytoplasm</keyword>
<keyword id="KW-0489">Methyltransferase</keyword>
<keyword id="KW-0698">rRNA processing</keyword>
<keyword id="KW-0949">S-adenosyl-L-methionine</keyword>
<keyword id="KW-0808">Transferase</keyword>
<dbReference type="EC" id="2.1.1.199" evidence="1"/>
<dbReference type="EMBL" id="CP000901">
    <property type="protein sequence ID" value="ABX85828.1"/>
    <property type="molecule type" value="Genomic_DNA"/>
</dbReference>
<dbReference type="RefSeq" id="WP_002210442.1">
    <property type="nucleotide sequence ID" value="NZ_CP009935.1"/>
</dbReference>
<dbReference type="SMR" id="A9R132"/>
<dbReference type="GeneID" id="57974068"/>
<dbReference type="KEGG" id="ypg:YpAngola_A2926"/>
<dbReference type="PATRIC" id="fig|349746.12.peg.3969"/>
<dbReference type="GO" id="GO:0005737">
    <property type="term" value="C:cytoplasm"/>
    <property type="evidence" value="ECO:0007669"/>
    <property type="project" value="UniProtKB-SubCell"/>
</dbReference>
<dbReference type="GO" id="GO:0071424">
    <property type="term" value="F:rRNA (cytosine-N4-)-methyltransferase activity"/>
    <property type="evidence" value="ECO:0007669"/>
    <property type="project" value="UniProtKB-UniRule"/>
</dbReference>
<dbReference type="GO" id="GO:0070475">
    <property type="term" value="P:rRNA base methylation"/>
    <property type="evidence" value="ECO:0007669"/>
    <property type="project" value="UniProtKB-UniRule"/>
</dbReference>
<dbReference type="FunFam" id="1.10.150.170:FF:000001">
    <property type="entry name" value="Ribosomal RNA small subunit methyltransferase H"/>
    <property type="match status" value="1"/>
</dbReference>
<dbReference type="Gene3D" id="1.10.150.170">
    <property type="entry name" value="Putative methyltransferase TM0872, insert domain"/>
    <property type="match status" value="1"/>
</dbReference>
<dbReference type="Gene3D" id="3.40.50.150">
    <property type="entry name" value="Vaccinia Virus protein VP39"/>
    <property type="match status" value="1"/>
</dbReference>
<dbReference type="HAMAP" id="MF_01007">
    <property type="entry name" value="16SrRNA_methyltr_H"/>
    <property type="match status" value="1"/>
</dbReference>
<dbReference type="InterPro" id="IPR002903">
    <property type="entry name" value="RsmH"/>
</dbReference>
<dbReference type="InterPro" id="IPR023397">
    <property type="entry name" value="SAM-dep_MeTrfase_MraW_recog"/>
</dbReference>
<dbReference type="InterPro" id="IPR029063">
    <property type="entry name" value="SAM-dependent_MTases_sf"/>
</dbReference>
<dbReference type="NCBIfam" id="TIGR00006">
    <property type="entry name" value="16S rRNA (cytosine(1402)-N(4))-methyltransferase RsmH"/>
    <property type="match status" value="1"/>
</dbReference>
<dbReference type="PANTHER" id="PTHR11265:SF0">
    <property type="entry name" value="12S RRNA N4-METHYLCYTIDINE METHYLTRANSFERASE"/>
    <property type="match status" value="1"/>
</dbReference>
<dbReference type="PANTHER" id="PTHR11265">
    <property type="entry name" value="S-ADENOSYL-METHYLTRANSFERASE MRAW"/>
    <property type="match status" value="1"/>
</dbReference>
<dbReference type="Pfam" id="PF01795">
    <property type="entry name" value="Methyltransf_5"/>
    <property type="match status" value="1"/>
</dbReference>
<dbReference type="PIRSF" id="PIRSF004486">
    <property type="entry name" value="MraW"/>
    <property type="match status" value="1"/>
</dbReference>
<dbReference type="SUPFAM" id="SSF81799">
    <property type="entry name" value="Putative methyltransferase TM0872, insert domain"/>
    <property type="match status" value="1"/>
</dbReference>
<dbReference type="SUPFAM" id="SSF53335">
    <property type="entry name" value="S-adenosyl-L-methionine-dependent methyltransferases"/>
    <property type="match status" value="1"/>
</dbReference>
<evidence type="ECO:0000255" key="1">
    <source>
        <dbReference type="HAMAP-Rule" id="MF_01007"/>
    </source>
</evidence>
<organism>
    <name type="scientific">Yersinia pestis bv. Antiqua (strain Angola)</name>
    <dbReference type="NCBI Taxonomy" id="349746"/>
    <lineage>
        <taxon>Bacteria</taxon>
        <taxon>Pseudomonadati</taxon>
        <taxon>Pseudomonadota</taxon>
        <taxon>Gammaproteobacteria</taxon>
        <taxon>Enterobacterales</taxon>
        <taxon>Yersiniaceae</taxon>
        <taxon>Yersinia</taxon>
    </lineage>
</organism>
<gene>
    <name evidence="1" type="primary">rsmH</name>
    <name type="synonym">mraW</name>
    <name type="ordered locus">YpAngola_A2926</name>
</gene>
<protein>
    <recommendedName>
        <fullName evidence="1">Ribosomal RNA small subunit methyltransferase H</fullName>
        <ecNumber evidence="1">2.1.1.199</ecNumber>
    </recommendedName>
    <alternativeName>
        <fullName evidence="1">16S rRNA m(4)C1402 methyltransferase</fullName>
    </alternativeName>
    <alternativeName>
        <fullName evidence="1">rRNA (cytosine-N(4)-)-methyltransferase RsmH</fullName>
    </alternativeName>
</protein>
<feature type="chain" id="PRO_0000387220" description="Ribosomal RNA small subunit methyltransferase H">
    <location>
        <begin position="1"/>
        <end position="320"/>
    </location>
</feature>
<feature type="binding site" evidence="1">
    <location>
        <begin position="42"/>
        <end position="44"/>
    </location>
    <ligand>
        <name>S-adenosyl-L-methionine</name>
        <dbReference type="ChEBI" id="CHEBI:59789"/>
    </ligand>
</feature>
<feature type="binding site" evidence="1">
    <location>
        <position position="62"/>
    </location>
    <ligand>
        <name>S-adenosyl-L-methionine</name>
        <dbReference type="ChEBI" id="CHEBI:59789"/>
    </ligand>
</feature>
<feature type="binding site" evidence="1">
    <location>
        <position position="86"/>
    </location>
    <ligand>
        <name>S-adenosyl-L-methionine</name>
        <dbReference type="ChEBI" id="CHEBI:59789"/>
    </ligand>
</feature>
<feature type="binding site" evidence="1">
    <location>
        <position position="108"/>
    </location>
    <ligand>
        <name>S-adenosyl-L-methionine</name>
        <dbReference type="ChEBI" id="CHEBI:59789"/>
    </ligand>
</feature>
<feature type="binding site" evidence="1">
    <location>
        <position position="115"/>
    </location>
    <ligand>
        <name>S-adenosyl-L-methionine</name>
        <dbReference type="ChEBI" id="CHEBI:59789"/>
    </ligand>
</feature>
<name>RSMH_YERPG</name>
<sequence>MVDNNKTVDNNYKHTSVLLDEAVKGLNIRDNGIYIDGTFGRGGHSRLILSQLGPEGRLIAIDRDPEAIEAAKQITDPRFSIVHGPFSDLAHYVRDLDLVGRIDGILLDLGVSSPQLDDAERGFSFMRDGPLDMRMDPSRGLSAAEWLMKASADDIAWVLKTFGEERFAKRLAKAIVERNLTQPMTRTKELADLIANASPFRDKHKHPATRSFQAIRIYINSELEEIERALDGAHEVLAPEGRLSVISFHSLEDRIVKNFIRHHSRGPQVPAGLPLTEAQLRSMGGRTLKSVGKMMPGDAEIAENPRARSSVLRFAERIGE</sequence>
<comment type="function">
    <text evidence="1">Specifically methylates the N4 position of cytidine in position 1402 (C1402) of 16S rRNA.</text>
</comment>
<comment type="catalytic activity">
    <reaction evidence="1">
        <text>cytidine(1402) in 16S rRNA + S-adenosyl-L-methionine = N(4)-methylcytidine(1402) in 16S rRNA + S-adenosyl-L-homocysteine + H(+)</text>
        <dbReference type="Rhea" id="RHEA:42928"/>
        <dbReference type="Rhea" id="RHEA-COMP:10286"/>
        <dbReference type="Rhea" id="RHEA-COMP:10287"/>
        <dbReference type="ChEBI" id="CHEBI:15378"/>
        <dbReference type="ChEBI" id="CHEBI:57856"/>
        <dbReference type="ChEBI" id="CHEBI:59789"/>
        <dbReference type="ChEBI" id="CHEBI:74506"/>
        <dbReference type="ChEBI" id="CHEBI:82748"/>
        <dbReference type="EC" id="2.1.1.199"/>
    </reaction>
</comment>
<comment type="subcellular location">
    <subcellularLocation>
        <location evidence="1">Cytoplasm</location>
    </subcellularLocation>
</comment>
<comment type="similarity">
    <text evidence="1">Belongs to the methyltransferase superfamily. RsmH family.</text>
</comment>
<accession>A9R132</accession>
<reference key="1">
    <citation type="journal article" date="2010" name="J. Bacteriol.">
        <title>Genome sequence of the deep-rooted Yersinia pestis strain Angola reveals new insights into the evolution and pangenome of the plague bacterium.</title>
        <authorList>
            <person name="Eppinger M."/>
            <person name="Worsham P.L."/>
            <person name="Nikolich M.P."/>
            <person name="Riley D.R."/>
            <person name="Sebastian Y."/>
            <person name="Mou S."/>
            <person name="Achtman M."/>
            <person name="Lindler L.E."/>
            <person name="Ravel J."/>
        </authorList>
    </citation>
    <scope>NUCLEOTIDE SEQUENCE [LARGE SCALE GENOMIC DNA]</scope>
    <source>
        <strain>Angola</strain>
    </source>
</reference>
<proteinExistence type="inferred from homology"/>